<accession>Q75FP0</accession>
<sequence>MSIVKSKIRTIPDYPKPGILFRDITSLLLDPEGLALTIGTFVNRYQGKGITKVAGIEARGFLTGAPLAFQLGVGFIPIRKKGKLPSETVSEEYDLEYGKDVIEVHKDSIQPGDKILLMDDLIATGGTMIAAVKLLKKLGAEIYEAGVIIDLPDLGGRKKLQEELKVPVFSICEFEGH</sequence>
<feature type="chain" id="PRO_0000149401" description="Adenine phosphoribosyltransferase">
    <location>
        <begin position="1"/>
        <end position="177"/>
    </location>
</feature>
<keyword id="KW-0963">Cytoplasm</keyword>
<keyword id="KW-0328">Glycosyltransferase</keyword>
<keyword id="KW-0660">Purine salvage</keyword>
<keyword id="KW-0808">Transferase</keyword>
<reference key="1">
    <citation type="journal article" date="2004" name="J. Bacteriol.">
        <title>Comparative genomics of two Leptospira interrogans serovars reveals novel insights into physiology and pathogenesis.</title>
        <authorList>
            <person name="Nascimento A.L.T.O."/>
            <person name="Ko A.I."/>
            <person name="Martins E.A.L."/>
            <person name="Monteiro-Vitorello C.B."/>
            <person name="Ho P.L."/>
            <person name="Haake D.A."/>
            <person name="Verjovski-Almeida S."/>
            <person name="Hartskeerl R.A."/>
            <person name="Marques M.V."/>
            <person name="Oliveira M.C."/>
            <person name="Menck C.F.M."/>
            <person name="Leite L.C.C."/>
            <person name="Carrer H."/>
            <person name="Coutinho L.L."/>
            <person name="Degrave W.M."/>
            <person name="Dellagostin O.A."/>
            <person name="El-Dorry H."/>
            <person name="Ferro E.S."/>
            <person name="Ferro M.I.T."/>
            <person name="Furlan L.R."/>
            <person name="Gamberini M."/>
            <person name="Giglioti E.A."/>
            <person name="Goes-Neto A."/>
            <person name="Goldman G.H."/>
            <person name="Goldman M.H.S."/>
            <person name="Harakava R."/>
            <person name="Jeronimo S.M.B."/>
            <person name="Junqueira-de-Azevedo I.L.M."/>
            <person name="Kimura E.T."/>
            <person name="Kuramae E.E."/>
            <person name="Lemos E.G.M."/>
            <person name="Lemos M.V.F."/>
            <person name="Marino C.L."/>
            <person name="Nunes L.R."/>
            <person name="de Oliveira R.C."/>
            <person name="Pereira G.G."/>
            <person name="Reis M.S."/>
            <person name="Schriefer A."/>
            <person name="Siqueira W.J."/>
            <person name="Sommer P."/>
            <person name="Tsai S.M."/>
            <person name="Simpson A.J.G."/>
            <person name="Ferro J.A."/>
            <person name="Camargo L.E.A."/>
            <person name="Kitajima J.P."/>
            <person name="Setubal J.C."/>
            <person name="Van Sluys M.A."/>
        </authorList>
    </citation>
    <scope>NUCLEOTIDE SEQUENCE [LARGE SCALE GENOMIC DNA]</scope>
    <source>
        <strain>Fiocruz L1-130</strain>
    </source>
</reference>
<comment type="function">
    <text evidence="1">Catalyzes a salvage reaction resulting in the formation of AMP, that is energically less costly than de novo synthesis.</text>
</comment>
<comment type="catalytic activity">
    <reaction evidence="1">
        <text>AMP + diphosphate = 5-phospho-alpha-D-ribose 1-diphosphate + adenine</text>
        <dbReference type="Rhea" id="RHEA:16609"/>
        <dbReference type="ChEBI" id="CHEBI:16708"/>
        <dbReference type="ChEBI" id="CHEBI:33019"/>
        <dbReference type="ChEBI" id="CHEBI:58017"/>
        <dbReference type="ChEBI" id="CHEBI:456215"/>
        <dbReference type="EC" id="2.4.2.7"/>
    </reaction>
</comment>
<comment type="pathway">
    <text evidence="1">Purine metabolism; AMP biosynthesis via salvage pathway; AMP from adenine: step 1/1.</text>
</comment>
<comment type="subunit">
    <text evidence="1">Homodimer.</text>
</comment>
<comment type="subcellular location">
    <subcellularLocation>
        <location evidence="1">Cytoplasm</location>
    </subcellularLocation>
</comment>
<comment type="similarity">
    <text evidence="1">Belongs to the purine/pyrimidine phosphoribosyltransferase family.</text>
</comment>
<proteinExistence type="inferred from homology"/>
<dbReference type="EC" id="2.4.2.7" evidence="1"/>
<dbReference type="EMBL" id="AE016824">
    <property type="protein sequence ID" value="AAS72170.1"/>
    <property type="molecule type" value="Genomic_DNA"/>
</dbReference>
<dbReference type="RefSeq" id="WP_000029425.1">
    <property type="nucleotide sequence ID" value="NC_005824.1"/>
</dbReference>
<dbReference type="SMR" id="Q75FP0"/>
<dbReference type="KEGG" id="lic:LIC_20142"/>
<dbReference type="HOGENOM" id="CLU_063339_3_0_12"/>
<dbReference type="UniPathway" id="UPA00588">
    <property type="reaction ID" value="UER00646"/>
</dbReference>
<dbReference type="Proteomes" id="UP000007037">
    <property type="component" value="Chromosome II"/>
</dbReference>
<dbReference type="GO" id="GO:0005737">
    <property type="term" value="C:cytoplasm"/>
    <property type="evidence" value="ECO:0007669"/>
    <property type="project" value="UniProtKB-SubCell"/>
</dbReference>
<dbReference type="GO" id="GO:0003999">
    <property type="term" value="F:adenine phosphoribosyltransferase activity"/>
    <property type="evidence" value="ECO:0007669"/>
    <property type="project" value="UniProtKB-UniRule"/>
</dbReference>
<dbReference type="GO" id="GO:0006168">
    <property type="term" value="P:adenine salvage"/>
    <property type="evidence" value="ECO:0007669"/>
    <property type="project" value="InterPro"/>
</dbReference>
<dbReference type="GO" id="GO:0044209">
    <property type="term" value="P:AMP salvage"/>
    <property type="evidence" value="ECO:0007669"/>
    <property type="project" value="UniProtKB-UniRule"/>
</dbReference>
<dbReference type="GO" id="GO:0006166">
    <property type="term" value="P:purine ribonucleoside salvage"/>
    <property type="evidence" value="ECO:0007669"/>
    <property type="project" value="UniProtKB-KW"/>
</dbReference>
<dbReference type="CDD" id="cd06223">
    <property type="entry name" value="PRTases_typeI"/>
    <property type="match status" value="1"/>
</dbReference>
<dbReference type="FunFam" id="3.40.50.2020:FF:000004">
    <property type="entry name" value="Adenine phosphoribosyltransferase"/>
    <property type="match status" value="1"/>
</dbReference>
<dbReference type="Gene3D" id="3.40.50.2020">
    <property type="match status" value="1"/>
</dbReference>
<dbReference type="HAMAP" id="MF_00004">
    <property type="entry name" value="Aden_phosphoribosyltr"/>
    <property type="match status" value="1"/>
</dbReference>
<dbReference type="InterPro" id="IPR005764">
    <property type="entry name" value="Ade_phspho_trans"/>
</dbReference>
<dbReference type="InterPro" id="IPR050120">
    <property type="entry name" value="Adenine_PRTase"/>
</dbReference>
<dbReference type="InterPro" id="IPR000836">
    <property type="entry name" value="PRibTrfase_dom"/>
</dbReference>
<dbReference type="InterPro" id="IPR029057">
    <property type="entry name" value="PRTase-like"/>
</dbReference>
<dbReference type="NCBIfam" id="TIGR01090">
    <property type="entry name" value="apt"/>
    <property type="match status" value="1"/>
</dbReference>
<dbReference type="NCBIfam" id="NF002632">
    <property type="entry name" value="PRK02304.1-1"/>
    <property type="match status" value="1"/>
</dbReference>
<dbReference type="NCBIfam" id="NF002634">
    <property type="entry name" value="PRK02304.1-3"/>
    <property type="match status" value="1"/>
</dbReference>
<dbReference type="NCBIfam" id="NF002636">
    <property type="entry name" value="PRK02304.1-5"/>
    <property type="match status" value="1"/>
</dbReference>
<dbReference type="PANTHER" id="PTHR11776">
    <property type="entry name" value="ADENINE PHOSPHORIBOSYLTRANSFERASE"/>
    <property type="match status" value="1"/>
</dbReference>
<dbReference type="PANTHER" id="PTHR11776:SF7">
    <property type="entry name" value="PHOSPHORIBOSYLTRANSFERASE DOMAIN-CONTAINING PROTEIN"/>
    <property type="match status" value="1"/>
</dbReference>
<dbReference type="Pfam" id="PF00156">
    <property type="entry name" value="Pribosyltran"/>
    <property type="match status" value="1"/>
</dbReference>
<dbReference type="SUPFAM" id="SSF53271">
    <property type="entry name" value="PRTase-like"/>
    <property type="match status" value="1"/>
</dbReference>
<dbReference type="PROSITE" id="PS00103">
    <property type="entry name" value="PUR_PYR_PR_TRANSFER"/>
    <property type="match status" value="1"/>
</dbReference>
<gene>
    <name evidence="1" type="primary">apt</name>
    <name type="ordered locus">LIC_20142</name>
</gene>
<name>APT_LEPIC</name>
<protein>
    <recommendedName>
        <fullName evidence="1">Adenine phosphoribosyltransferase</fullName>
        <shortName evidence="1">APRT</shortName>
        <ecNumber evidence="1">2.4.2.7</ecNumber>
    </recommendedName>
</protein>
<organism>
    <name type="scientific">Leptospira interrogans serogroup Icterohaemorrhagiae serovar copenhageni (strain Fiocruz L1-130)</name>
    <dbReference type="NCBI Taxonomy" id="267671"/>
    <lineage>
        <taxon>Bacteria</taxon>
        <taxon>Pseudomonadati</taxon>
        <taxon>Spirochaetota</taxon>
        <taxon>Spirochaetia</taxon>
        <taxon>Leptospirales</taxon>
        <taxon>Leptospiraceae</taxon>
        <taxon>Leptospira</taxon>
    </lineage>
</organism>
<evidence type="ECO:0000255" key="1">
    <source>
        <dbReference type="HAMAP-Rule" id="MF_00004"/>
    </source>
</evidence>